<sequence>EVKLLESGGGLVQPGGSLKLSCAASGFDFSRYWMSWVRQAPGKGLEWIGEINPDSSTINYTPSLKDKFIISRDNAKNTLYLQMSKVRSEDTALYYCARLHYYGYAAYWGQGTLVTVSAE</sequence>
<accession>P01807</accession>
<keyword id="KW-1064">Adaptive immunity</keyword>
<keyword id="KW-0903">Direct protein sequencing</keyword>
<keyword id="KW-0391">Immunity</keyword>
<keyword id="KW-1280">Immunoglobulin</keyword>
<keyword id="KW-1185">Reference proteome</keyword>
<feature type="chain" id="PRO_0000059890" description="Ig heavy chain V region X44">
    <location>
        <begin position="1"/>
        <end position="119" status="greater than"/>
    </location>
</feature>
<feature type="domain" description="Ig-like">
    <location>
        <begin position="1"/>
        <end position="117"/>
    </location>
</feature>
<feature type="non-terminal residue">
    <location>
        <position position="119"/>
    </location>
</feature>
<proteinExistence type="evidence at protein level"/>
<comment type="miscellaneous">
    <text>This chain was isolated from an IgA myeloma protein that binds galactan.</text>
</comment>
<name>HVM37_MOUSE</name>
<dbReference type="PIR" id="A02077">
    <property type="entry name" value="AVMSX4"/>
</dbReference>
<dbReference type="SMR" id="P01807"/>
<dbReference type="FunCoup" id="P01807">
    <property type="interactions" value="514"/>
</dbReference>
<dbReference type="jPOST" id="P01807"/>
<dbReference type="InParanoid" id="P01807"/>
<dbReference type="Proteomes" id="UP000000589">
    <property type="component" value="Unplaced"/>
</dbReference>
<dbReference type="RNAct" id="P01807">
    <property type="molecule type" value="protein"/>
</dbReference>
<dbReference type="GO" id="GO:0005576">
    <property type="term" value="C:extracellular region"/>
    <property type="evidence" value="ECO:0007669"/>
    <property type="project" value="UniProtKB-ARBA"/>
</dbReference>
<dbReference type="GO" id="GO:0019814">
    <property type="term" value="C:immunoglobulin complex"/>
    <property type="evidence" value="ECO:0007669"/>
    <property type="project" value="UniProtKB-KW"/>
</dbReference>
<dbReference type="GO" id="GO:0003823">
    <property type="term" value="F:antigen binding"/>
    <property type="evidence" value="ECO:0000318"/>
    <property type="project" value="GO_Central"/>
</dbReference>
<dbReference type="GO" id="GO:0016064">
    <property type="term" value="P:immunoglobulin mediated immune response"/>
    <property type="evidence" value="ECO:0000318"/>
    <property type="project" value="GO_Central"/>
</dbReference>
<dbReference type="CDD" id="cd04981">
    <property type="entry name" value="IgV_H"/>
    <property type="match status" value="1"/>
</dbReference>
<dbReference type="FunFam" id="2.60.40.10:FF:001259">
    <property type="entry name" value="Immunoglobulin heavy variable 13-2"/>
    <property type="match status" value="1"/>
</dbReference>
<dbReference type="Gene3D" id="2.60.40.10">
    <property type="entry name" value="Immunoglobulins"/>
    <property type="match status" value="1"/>
</dbReference>
<dbReference type="InterPro" id="IPR007110">
    <property type="entry name" value="Ig-like_dom"/>
</dbReference>
<dbReference type="InterPro" id="IPR036179">
    <property type="entry name" value="Ig-like_dom_sf"/>
</dbReference>
<dbReference type="InterPro" id="IPR013783">
    <property type="entry name" value="Ig-like_fold"/>
</dbReference>
<dbReference type="InterPro" id="IPR003599">
    <property type="entry name" value="Ig_sub"/>
</dbReference>
<dbReference type="InterPro" id="IPR013106">
    <property type="entry name" value="Ig_V-set"/>
</dbReference>
<dbReference type="InterPro" id="IPR050199">
    <property type="entry name" value="IgHV"/>
</dbReference>
<dbReference type="PANTHER" id="PTHR23266">
    <property type="entry name" value="IMMUNOGLOBULIN HEAVY CHAIN"/>
    <property type="match status" value="1"/>
</dbReference>
<dbReference type="Pfam" id="PF07686">
    <property type="entry name" value="V-set"/>
    <property type="match status" value="1"/>
</dbReference>
<dbReference type="SMART" id="SM00409">
    <property type="entry name" value="IG"/>
    <property type="match status" value="1"/>
</dbReference>
<dbReference type="SMART" id="SM00406">
    <property type="entry name" value="IGv"/>
    <property type="match status" value="1"/>
</dbReference>
<dbReference type="SUPFAM" id="SSF48726">
    <property type="entry name" value="Immunoglobulin"/>
    <property type="match status" value="1"/>
</dbReference>
<dbReference type="PROSITE" id="PS50835">
    <property type="entry name" value="IG_LIKE"/>
    <property type="match status" value="1"/>
</dbReference>
<reference key="1">
    <citation type="journal article" date="1979" name="Proc. Natl. Acad. Sci. U.S.A.">
        <title>Structural evidence for independent joining region gene in immunoglobulin heavy chains from anti-galactan myeloma proteins and its potential role in generating diversity in complementarity-determining regions.</title>
        <authorList>
            <person name="Rao D.N."/>
            <person name="Rudikoff S."/>
            <person name="Krutzsch H."/>
            <person name="Potter M."/>
        </authorList>
    </citation>
    <scope>PROTEIN SEQUENCE</scope>
</reference>
<reference key="2">
    <citation type="journal article" date="1989" name="J. Mol. Biol.">
        <title>Comparative sequence and immunochemical analyses of murine monoclonal anti-morphine antibodies.</title>
        <authorList>
            <person name="Miller A. III"/>
            <person name="Glasel J.A."/>
        </authorList>
    </citation>
    <scope>NUCLEOTIDE SEQUENCE OF 1-118</scope>
</reference>
<protein>
    <recommendedName>
        <fullName>Ig heavy chain V region X44</fullName>
    </recommendedName>
</protein>
<organism>
    <name type="scientific">Mus musculus</name>
    <name type="common">Mouse</name>
    <dbReference type="NCBI Taxonomy" id="10090"/>
    <lineage>
        <taxon>Eukaryota</taxon>
        <taxon>Metazoa</taxon>
        <taxon>Chordata</taxon>
        <taxon>Craniata</taxon>
        <taxon>Vertebrata</taxon>
        <taxon>Euteleostomi</taxon>
        <taxon>Mammalia</taxon>
        <taxon>Eutheria</taxon>
        <taxon>Euarchontoglires</taxon>
        <taxon>Glires</taxon>
        <taxon>Rodentia</taxon>
        <taxon>Myomorpha</taxon>
        <taxon>Muroidea</taxon>
        <taxon>Muridae</taxon>
        <taxon>Murinae</taxon>
        <taxon>Mus</taxon>
        <taxon>Mus</taxon>
    </lineage>
</organism>